<accession>P54231</accession>
<evidence type="ECO:0000250" key="1"/>
<evidence type="ECO:0000250" key="2">
    <source>
        <dbReference type="UniProtKB" id="P41225"/>
    </source>
</evidence>
<evidence type="ECO:0000250" key="3">
    <source>
        <dbReference type="UniProtKB" id="P48430"/>
    </source>
</evidence>
<evidence type="ECO:0000250" key="4">
    <source>
        <dbReference type="UniProtKB" id="P48431"/>
    </source>
</evidence>
<evidence type="ECO:0000250" key="5">
    <source>
        <dbReference type="UniProtKB" id="P48432"/>
    </source>
</evidence>
<evidence type="ECO:0000255" key="6">
    <source>
        <dbReference type="PROSITE-ProRule" id="PRU00267"/>
    </source>
</evidence>
<evidence type="ECO:0000256" key="7">
    <source>
        <dbReference type="SAM" id="MobiDB-lite"/>
    </source>
</evidence>
<keyword id="KW-0010">Activator</keyword>
<keyword id="KW-0217">Developmental protein</keyword>
<keyword id="KW-0238">DNA-binding</keyword>
<keyword id="KW-1017">Isopeptide bond</keyword>
<keyword id="KW-0488">Methylation</keyword>
<keyword id="KW-0539">Nucleus</keyword>
<keyword id="KW-0597">Phosphoprotein</keyword>
<keyword id="KW-1185">Reference proteome</keyword>
<keyword id="KW-0804">Transcription</keyword>
<keyword id="KW-0805">Transcription regulation</keyword>
<keyword id="KW-0832">Ubl conjugation</keyword>
<comment type="function">
    <text evidence="3 4 5">Transcription factor that forms a trimeric complex with OCT4 on DNA and controls the expression of a number of genes involved in embryonic development such as YES1, FGF4, UTF1 and ZFP206 (By similarity). Binds to the proximal enhancer region of NANOG (By similarity). Critical for early embryogenesis and for embryonic stem cell pluripotency (By similarity). Downstream SRRT target that mediates the promotion of neural stem cell self-renewal (By similarity). Keeps neural cells undifferentiated by counteracting the activity of proneural proteins and suppresses neuronal differentiation (By similarity). May function as a switch in neuronal development (By similarity).</text>
</comment>
<comment type="subunit">
    <text evidence="4 5">Interacts with ZSCAN10 (By similarity). Interacts with SOX3 and FGFR1 (By similarity). Interacts with GLIS1 (By similarity). Interacts with POU5F1; binds synergistically with POU5F1 to DNA (By similarity). Interacts with DDX56 (By similarity). Interacts with L3MBTL3 and DCAF5; the interaction requires methylation at Lys-45 and is necessary to target SOX2 for ubiquitination by the CRL4-DCAF5 E3 ubiquitin ligase complex (By similarity). Interacts with RCOR1/CoREST (By similarity). Interacts with PHF20L1; the interaction requires methylation at Lys-45 and Lys-120 and protects SOX2 from degradation (By similarity). Interacts with TRIM26; this interaction prevents ubiquitination by WWP2 (By similarity).</text>
</comment>
<comment type="subcellular location">
    <subcellularLocation>
        <location>Nucleus</location>
    </subcellularLocation>
</comment>
<comment type="domain">
    <text evidence="2">The 9aaTAD motif is a transactivation domain present in a large number of yeast and animal transcription factors.</text>
</comment>
<comment type="PTM">
    <text evidence="1">Sumoylation inhibits DNA binding and negatively regulates the FGF4 transactivation.</text>
</comment>
<comment type="PTM">
    <text evidence="4">Methylation at Lys-45 and Lys-120 is necessary for the regulation of SOX2 proteasomal degradation.</text>
</comment>
<comment type="PTM">
    <text evidence="4">Ubiquitinated by WWP2, leading to proteasomal degradation.</text>
</comment>
<protein>
    <recommendedName>
        <fullName>Transcription factor SOX-2</fullName>
    </recommendedName>
</protein>
<feature type="chain" id="PRO_0000048717" description="Transcription factor SOX-2">
    <location>
        <begin position="1"/>
        <end position="320"/>
    </location>
</feature>
<feature type="DNA-binding region" description="HMG box" evidence="6">
    <location>
        <begin position="44"/>
        <end position="112"/>
    </location>
</feature>
<feature type="region of interest" description="Disordered" evidence="7">
    <location>
        <begin position="1"/>
        <end position="44"/>
    </location>
</feature>
<feature type="region of interest" description="Disordered" evidence="7">
    <location>
        <begin position="246"/>
        <end position="269"/>
    </location>
</feature>
<feature type="region of interest" description="Disordered" evidence="7">
    <location>
        <begin position="300"/>
        <end position="320"/>
    </location>
</feature>
<feature type="short sequence motif" description="9aaTAD" evidence="2">
    <location>
        <begin position="275"/>
        <end position="283"/>
    </location>
</feature>
<feature type="compositionally biased region" description="Gly residues" evidence="7">
    <location>
        <begin position="18"/>
        <end position="27"/>
    </location>
</feature>
<feature type="compositionally biased region" description="Low complexity" evidence="7">
    <location>
        <begin position="249"/>
        <end position="264"/>
    </location>
</feature>
<feature type="modified residue" description="N6-methyllysine" evidence="4">
    <location>
        <position position="45"/>
    </location>
</feature>
<feature type="modified residue" description="N6-methyllysine" evidence="4">
    <location>
        <position position="120"/>
    </location>
</feature>
<feature type="modified residue" description="Phosphoserine" evidence="4">
    <location>
        <position position="254"/>
    </location>
</feature>
<feature type="cross-link" description="Glycyl lysine isopeptide (Lys-Gly) (interchain with G-Cter in SUMO)" evidence="1">
    <location>
        <position position="248"/>
    </location>
</feature>
<name>SOX2_SHEEP</name>
<dbReference type="EMBL" id="X96997">
    <property type="protein sequence ID" value="CAA65725.1"/>
    <property type="molecule type" value="Genomic_DNA"/>
</dbReference>
<dbReference type="RefSeq" id="NP_001305003.1">
    <property type="nucleotide sequence ID" value="NM_001318074.1"/>
</dbReference>
<dbReference type="BMRB" id="P54231"/>
<dbReference type="SMR" id="P54231"/>
<dbReference type="STRING" id="9940.ENSOARP00000015658"/>
<dbReference type="PaxDb" id="9940-ENSOARP00000015658"/>
<dbReference type="Ensembl" id="ENSOART00020071363">
    <property type="protein sequence ID" value="ENSOARP00020058966"/>
    <property type="gene ID" value="ENSOARG00020033984"/>
</dbReference>
<dbReference type="Ensembl" id="ENSOART00025030826">
    <property type="protein sequence ID" value="ENSOARP00025015311"/>
    <property type="gene ID" value="ENSOARG00025018736"/>
</dbReference>
<dbReference type="Ensembl" id="ENSOART00025030836">
    <property type="protein sequence ID" value="ENSOARP00025015317"/>
    <property type="gene ID" value="ENSOARG00025018736"/>
</dbReference>
<dbReference type="Ensembl" id="ENSOART00040026007">
    <property type="protein sequence ID" value="ENSOARP00040013432"/>
    <property type="gene ID" value="ENSOARG00040015738"/>
</dbReference>
<dbReference type="Ensembl" id="ENSOART00040026014">
    <property type="protein sequence ID" value="ENSOARP00040013436"/>
    <property type="gene ID" value="ENSOARG00040015738"/>
</dbReference>
<dbReference type="Ensembl" id="ENSOART00185007660">
    <property type="protein sequence ID" value="ENSOARP00185003536"/>
    <property type="gene ID" value="ENSOARG00185004874"/>
</dbReference>
<dbReference type="Ensembl" id="ENSOART00215009520">
    <property type="protein sequence ID" value="ENSOARP00215005350"/>
    <property type="gene ID" value="ENSOARG00215005551"/>
</dbReference>
<dbReference type="Ensembl" id="ENSOART00215009530">
    <property type="protein sequence ID" value="ENSOARP00215005360"/>
    <property type="gene ID" value="ENSOARG00215005551"/>
</dbReference>
<dbReference type="Ensembl" id="ENSOART00220064810">
    <property type="protein sequence ID" value="ENSOARP00220034647"/>
    <property type="gene ID" value="ENSOARG00220039201"/>
</dbReference>
<dbReference type="Ensembl" id="ENSOART00225096045">
    <property type="protein sequence ID" value="ENSOARP00225050999"/>
    <property type="gene ID" value="ENSOARG00225057521"/>
</dbReference>
<dbReference type="Ensembl" id="ENSOART00225096046">
    <property type="protein sequence ID" value="ENSOARP00225051000"/>
    <property type="gene ID" value="ENSOARG00225057521"/>
</dbReference>
<dbReference type="Ensembl" id="ENSOART00260018048">
    <property type="protein sequence ID" value="ENSOARP00260009120"/>
    <property type="gene ID" value="ENSOARG00260011113"/>
</dbReference>
<dbReference type="Ensembl" id="ENSOART00260018052">
    <property type="protein sequence ID" value="ENSOARP00260009123"/>
    <property type="gene ID" value="ENSOARG00260011113"/>
</dbReference>
<dbReference type="GeneID" id="101110563"/>
<dbReference type="KEGG" id="oas:101110563"/>
<dbReference type="CTD" id="6657"/>
<dbReference type="eggNOG" id="KOG0527">
    <property type="taxonomic scope" value="Eukaryota"/>
</dbReference>
<dbReference type="OrthoDB" id="6247875at2759"/>
<dbReference type="Proteomes" id="UP000002356">
    <property type="component" value="Unplaced"/>
</dbReference>
<dbReference type="GO" id="GO:0005737">
    <property type="term" value="C:cytoplasm"/>
    <property type="evidence" value="ECO:0000250"/>
    <property type="project" value="UniProtKB"/>
</dbReference>
<dbReference type="GO" id="GO:0005829">
    <property type="term" value="C:cytosol"/>
    <property type="evidence" value="ECO:0007669"/>
    <property type="project" value="Ensembl"/>
</dbReference>
<dbReference type="GO" id="GO:0005654">
    <property type="term" value="C:nucleoplasm"/>
    <property type="evidence" value="ECO:0007669"/>
    <property type="project" value="Ensembl"/>
</dbReference>
<dbReference type="GO" id="GO:0001228">
    <property type="term" value="F:DNA-binding transcription activator activity, RNA polymerase II-specific"/>
    <property type="evidence" value="ECO:0007669"/>
    <property type="project" value="TreeGrafter"/>
</dbReference>
<dbReference type="GO" id="GO:0035198">
    <property type="term" value="F:miRNA binding"/>
    <property type="evidence" value="ECO:0007669"/>
    <property type="project" value="Ensembl"/>
</dbReference>
<dbReference type="GO" id="GO:0000978">
    <property type="term" value="F:RNA polymerase II cis-regulatory region sequence-specific DNA binding"/>
    <property type="evidence" value="ECO:0007669"/>
    <property type="project" value="TreeGrafter"/>
</dbReference>
<dbReference type="GO" id="GO:0000976">
    <property type="term" value="F:transcription cis-regulatory region binding"/>
    <property type="evidence" value="ECO:0000250"/>
    <property type="project" value="UniProtKB"/>
</dbReference>
<dbReference type="GO" id="GO:0001714">
    <property type="term" value="P:endodermal cell fate specification"/>
    <property type="evidence" value="ECO:0007669"/>
    <property type="project" value="Ensembl"/>
</dbReference>
<dbReference type="GO" id="GO:0001654">
    <property type="term" value="P:eye development"/>
    <property type="evidence" value="ECO:0007669"/>
    <property type="project" value="Ensembl"/>
</dbReference>
<dbReference type="GO" id="GO:0048839">
    <property type="term" value="P:inner ear development"/>
    <property type="evidence" value="ECO:0007669"/>
    <property type="project" value="Ensembl"/>
</dbReference>
<dbReference type="GO" id="GO:0090090">
    <property type="term" value="P:negative regulation of canonical Wnt signaling pathway"/>
    <property type="evidence" value="ECO:0007669"/>
    <property type="project" value="Ensembl"/>
</dbReference>
<dbReference type="GO" id="GO:1902807">
    <property type="term" value="P:negative regulation of cell cycle G1/S phase transition"/>
    <property type="evidence" value="ECO:0007669"/>
    <property type="project" value="Ensembl"/>
</dbReference>
<dbReference type="GO" id="GO:0045665">
    <property type="term" value="P:negative regulation of neuron differentiation"/>
    <property type="evidence" value="ECO:0000250"/>
    <property type="project" value="UniProtKB"/>
</dbReference>
<dbReference type="GO" id="GO:0000122">
    <property type="term" value="P:negative regulation of transcription by RNA polymerase II"/>
    <property type="evidence" value="ECO:0000250"/>
    <property type="project" value="UniProtKB"/>
</dbReference>
<dbReference type="GO" id="GO:0030182">
    <property type="term" value="P:neuron differentiation"/>
    <property type="evidence" value="ECO:0007669"/>
    <property type="project" value="TreeGrafter"/>
</dbReference>
<dbReference type="GO" id="GO:0097150">
    <property type="term" value="P:neuronal stem cell population maintenance"/>
    <property type="evidence" value="ECO:0000250"/>
    <property type="project" value="UniProtKB"/>
</dbReference>
<dbReference type="GO" id="GO:0001649">
    <property type="term" value="P:osteoblast differentiation"/>
    <property type="evidence" value="ECO:0007669"/>
    <property type="project" value="Ensembl"/>
</dbReference>
<dbReference type="GO" id="GO:0021983">
    <property type="term" value="P:pituitary gland development"/>
    <property type="evidence" value="ECO:0007669"/>
    <property type="project" value="Ensembl"/>
</dbReference>
<dbReference type="GO" id="GO:0043410">
    <property type="term" value="P:positive regulation of MAPK cascade"/>
    <property type="evidence" value="ECO:0007669"/>
    <property type="project" value="Ensembl"/>
</dbReference>
<dbReference type="GO" id="GO:0070848">
    <property type="term" value="P:response to growth factor"/>
    <property type="evidence" value="ECO:0007669"/>
    <property type="project" value="Ensembl"/>
</dbReference>
<dbReference type="GO" id="GO:0009611">
    <property type="term" value="P:response to wounding"/>
    <property type="evidence" value="ECO:0007669"/>
    <property type="project" value="Ensembl"/>
</dbReference>
<dbReference type="GO" id="GO:0035019">
    <property type="term" value="P:somatic stem cell population maintenance"/>
    <property type="evidence" value="ECO:0007669"/>
    <property type="project" value="Ensembl"/>
</dbReference>
<dbReference type="CDD" id="cd01388">
    <property type="entry name" value="HMG-box_SoxB"/>
    <property type="match status" value="1"/>
</dbReference>
<dbReference type="FunFam" id="1.10.30.10:FF:000002">
    <property type="entry name" value="transcription factor Sox-2"/>
    <property type="match status" value="1"/>
</dbReference>
<dbReference type="Gene3D" id="1.10.30.10">
    <property type="entry name" value="High mobility group box domain"/>
    <property type="match status" value="1"/>
</dbReference>
<dbReference type="InterPro" id="IPR009071">
    <property type="entry name" value="HMG_box_dom"/>
</dbReference>
<dbReference type="InterPro" id="IPR036910">
    <property type="entry name" value="HMG_box_dom_sf"/>
</dbReference>
<dbReference type="InterPro" id="IPR022097">
    <property type="entry name" value="SOX_fam"/>
</dbReference>
<dbReference type="InterPro" id="IPR050140">
    <property type="entry name" value="SRY-related_HMG-box_TF-like"/>
</dbReference>
<dbReference type="PANTHER" id="PTHR10270">
    <property type="entry name" value="SOX TRANSCRIPTION FACTOR"/>
    <property type="match status" value="1"/>
</dbReference>
<dbReference type="PANTHER" id="PTHR10270:SF231">
    <property type="entry name" value="TRANSCRIPTION FACTOR SOX-2"/>
    <property type="match status" value="1"/>
</dbReference>
<dbReference type="Pfam" id="PF00505">
    <property type="entry name" value="HMG_box"/>
    <property type="match status" value="1"/>
</dbReference>
<dbReference type="Pfam" id="PF12336">
    <property type="entry name" value="SOXp"/>
    <property type="match status" value="1"/>
</dbReference>
<dbReference type="SMART" id="SM00398">
    <property type="entry name" value="HMG"/>
    <property type="match status" value="1"/>
</dbReference>
<dbReference type="SUPFAM" id="SSF47095">
    <property type="entry name" value="HMG-box"/>
    <property type="match status" value="1"/>
</dbReference>
<dbReference type="PROSITE" id="PS50118">
    <property type="entry name" value="HMG_BOX_2"/>
    <property type="match status" value="1"/>
</dbReference>
<sequence length="320" mass="34481">MYNMMETELKPPGPQQTSGGGGGGGGNSTAAAAGGNQKNSPDRVKRPMNAFMVWSRGQRRKMAQENPKMHNSEISKRLGAEWKLLSETEKRPFIDEAKRLRALHMKEHPDYKYRPRRKTKTLMKKDKYTLPGGLLAPGGNSMASGVGVGAGLGAGVNQRMDSYAHMNGWSNGSYSMMQDQLGYPQHPGLNAHGAAQMQPMHRYDVSALQYNSMTSSQTYMNGSPTYSMSYSQQGTPGMALGSMGSVVKSEASSSPPVVTSSSHSRAPCQAGDLRDMISMYLPGAEVPEPAAPSRLHMSQHYQSGPVPGTAINGTLPLSHM</sequence>
<reference key="1">
    <citation type="journal article" date="1997" name="Gene">
        <title>The ovine SOX2 gene: sequence, chromosomal localization and gonadal expression.</title>
        <authorList>
            <person name="Payen E."/>
            <person name="Pailhoux E."/>
            <person name="Gianquinto L."/>
            <person name="Hayes H."/>
            <person name="le Pennec N."/>
            <person name="Bezard J."/>
            <person name="Cotinot C."/>
        </authorList>
    </citation>
    <scope>NUCLEOTIDE SEQUENCE [GENOMIC DNA]</scope>
</reference>
<organism>
    <name type="scientific">Ovis aries</name>
    <name type="common">Sheep</name>
    <dbReference type="NCBI Taxonomy" id="9940"/>
    <lineage>
        <taxon>Eukaryota</taxon>
        <taxon>Metazoa</taxon>
        <taxon>Chordata</taxon>
        <taxon>Craniata</taxon>
        <taxon>Vertebrata</taxon>
        <taxon>Euteleostomi</taxon>
        <taxon>Mammalia</taxon>
        <taxon>Eutheria</taxon>
        <taxon>Laurasiatheria</taxon>
        <taxon>Artiodactyla</taxon>
        <taxon>Ruminantia</taxon>
        <taxon>Pecora</taxon>
        <taxon>Bovidae</taxon>
        <taxon>Caprinae</taxon>
        <taxon>Ovis</taxon>
    </lineage>
</organism>
<proteinExistence type="inferred from homology"/>
<gene>
    <name type="primary">SOX2</name>
</gene>